<reference key="1">
    <citation type="journal article" date="2008" name="BMC Genomics">
        <title>Genomics of an extreme psychrophile, Psychromonas ingrahamii.</title>
        <authorList>
            <person name="Riley M."/>
            <person name="Staley J.T."/>
            <person name="Danchin A."/>
            <person name="Wang T.Z."/>
            <person name="Brettin T.S."/>
            <person name="Hauser L.J."/>
            <person name="Land M.L."/>
            <person name="Thompson L.S."/>
        </authorList>
    </citation>
    <scope>NUCLEOTIDE SEQUENCE [LARGE SCALE GENOMIC DNA]</scope>
    <source>
        <strain>DSM 17664 / CCUG 51855 / 37</strain>
    </source>
</reference>
<evidence type="ECO:0000255" key="1">
    <source>
        <dbReference type="HAMAP-Rule" id="MF_00052"/>
    </source>
</evidence>
<evidence type="ECO:0000255" key="2">
    <source>
        <dbReference type="PROSITE-ProRule" id="PRU01319"/>
    </source>
</evidence>
<proteinExistence type="inferred from homology"/>
<name>RNH2_PSYIN</name>
<gene>
    <name evidence="1" type="primary">rnhB</name>
    <name type="ordered locus">Ping_2962</name>
</gene>
<keyword id="KW-0963">Cytoplasm</keyword>
<keyword id="KW-0255">Endonuclease</keyword>
<keyword id="KW-0378">Hydrolase</keyword>
<keyword id="KW-0464">Manganese</keyword>
<keyword id="KW-0479">Metal-binding</keyword>
<keyword id="KW-0540">Nuclease</keyword>
<keyword id="KW-1185">Reference proteome</keyword>
<protein>
    <recommendedName>
        <fullName evidence="1">Ribonuclease HII</fullName>
        <shortName evidence="1">RNase HII</shortName>
        <ecNumber evidence="1">3.1.26.4</ecNumber>
    </recommendedName>
</protein>
<sequence length="204" mass="22267">MSKLKIDFPAVVYPDFTLIAGVDEVGRGPLVGDVVTACVILDANNPISGLADSKKLSEKKLALLFDEIQEKALFVAVGRASPVEIDALNILHATMLAMQRAVDNLSISPEFVFIDGNRCPQLSMPCESVVKGDARVAEISAASIIAKVTRDREMCELDKQYPHYGFAKHKGYPTKAHFAAIEKHGVTPEYRKSFKPVKKVLGLL</sequence>
<accession>A1SYU9</accession>
<comment type="function">
    <text evidence="1">Endonuclease that specifically degrades the RNA of RNA-DNA hybrids.</text>
</comment>
<comment type="catalytic activity">
    <reaction evidence="1">
        <text>Endonucleolytic cleavage to 5'-phosphomonoester.</text>
        <dbReference type="EC" id="3.1.26.4"/>
    </reaction>
</comment>
<comment type="cofactor">
    <cofactor evidence="1">
        <name>Mn(2+)</name>
        <dbReference type="ChEBI" id="CHEBI:29035"/>
    </cofactor>
    <cofactor evidence="1">
        <name>Mg(2+)</name>
        <dbReference type="ChEBI" id="CHEBI:18420"/>
    </cofactor>
    <text evidence="1">Manganese or magnesium. Binds 1 divalent metal ion per monomer in the absence of substrate. May bind a second metal ion after substrate binding.</text>
</comment>
<comment type="subcellular location">
    <subcellularLocation>
        <location evidence="1">Cytoplasm</location>
    </subcellularLocation>
</comment>
<comment type="similarity">
    <text evidence="1">Belongs to the RNase HII family.</text>
</comment>
<feature type="chain" id="PRO_0000334942" description="Ribonuclease HII">
    <location>
        <begin position="1"/>
        <end position="204"/>
    </location>
</feature>
<feature type="domain" description="RNase H type-2" evidence="2">
    <location>
        <begin position="17"/>
        <end position="204"/>
    </location>
</feature>
<feature type="binding site" evidence="1">
    <location>
        <position position="23"/>
    </location>
    <ligand>
        <name>a divalent metal cation</name>
        <dbReference type="ChEBI" id="CHEBI:60240"/>
    </ligand>
</feature>
<feature type="binding site" evidence="1">
    <location>
        <position position="24"/>
    </location>
    <ligand>
        <name>a divalent metal cation</name>
        <dbReference type="ChEBI" id="CHEBI:60240"/>
    </ligand>
</feature>
<feature type="binding site" evidence="1">
    <location>
        <position position="115"/>
    </location>
    <ligand>
        <name>a divalent metal cation</name>
        <dbReference type="ChEBI" id="CHEBI:60240"/>
    </ligand>
</feature>
<organism>
    <name type="scientific">Psychromonas ingrahamii (strain DSM 17664 / CCUG 51855 / 37)</name>
    <dbReference type="NCBI Taxonomy" id="357804"/>
    <lineage>
        <taxon>Bacteria</taxon>
        <taxon>Pseudomonadati</taxon>
        <taxon>Pseudomonadota</taxon>
        <taxon>Gammaproteobacteria</taxon>
        <taxon>Alteromonadales</taxon>
        <taxon>Psychromonadaceae</taxon>
        <taxon>Psychromonas</taxon>
    </lineage>
</organism>
<dbReference type="EC" id="3.1.26.4" evidence="1"/>
<dbReference type="EMBL" id="CP000510">
    <property type="protein sequence ID" value="ABM04664.1"/>
    <property type="molecule type" value="Genomic_DNA"/>
</dbReference>
<dbReference type="RefSeq" id="WP_011771218.1">
    <property type="nucleotide sequence ID" value="NC_008709.1"/>
</dbReference>
<dbReference type="SMR" id="A1SYU9"/>
<dbReference type="STRING" id="357804.Ping_2962"/>
<dbReference type="KEGG" id="pin:Ping_2962"/>
<dbReference type="eggNOG" id="COG0164">
    <property type="taxonomic scope" value="Bacteria"/>
</dbReference>
<dbReference type="HOGENOM" id="CLU_036532_3_2_6"/>
<dbReference type="OrthoDB" id="9803420at2"/>
<dbReference type="Proteomes" id="UP000000639">
    <property type="component" value="Chromosome"/>
</dbReference>
<dbReference type="GO" id="GO:0005737">
    <property type="term" value="C:cytoplasm"/>
    <property type="evidence" value="ECO:0007669"/>
    <property type="project" value="UniProtKB-SubCell"/>
</dbReference>
<dbReference type="GO" id="GO:0032299">
    <property type="term" value="C:ribonuclease H2 complex"/>
    <property type="evidence" value="ECO:0007669"/>
    <property type="project" value="TreeGrafter"/>
</dbReference>
<dbReference type="GO" id="GO:0030145">
    <property type="term" value="F:manganese ion binding"/>
    <property type="evidence" value="ECO:0007669"/>
    <property type="project" value="UniProtKB-UniRule"/>
</dbReference>
<dbReference type="GO" id="GO:0003723">
    <property type="term" value="F:RNA binding"/>
    <property type="evidence" value="ECO:0007669"/>
    <property type="project" value="InterPro"/>
</dbReference>
<dbReference type="GO" id="GO:0004523">
    <property type="term" value="F:RNA-DNA hybrid ribonuclease activity"/>
    <property type="evidence" value="ECO:0007669"/>
    <property type="project" value="UniProtKB-UniRule"/>
</dbReference>
<dbReference type="GO" id="GO:0043137">
    <property type="term" value="P:DNA replication, removal of RNA primer"/>
    <property type="evidence" value="ECO:0007669"/>
    <property type="project" value="TreeGrafter"/>
</dbReference>
<dbReference type="GO" id="GO:0006298">
    <property type="term" value="P:mismatch repair"/>
    <property type="evidence" value="ECO:0007669"/>
    <property type="project" value="TreeGrafter"/>
</dbReference>
<dbReference type="CDD" id="cd07182">
    <property type="entry name" value="RNase_HII_bacteria_HII_like"/>
    <property type="match status" value="1"/>
</dbReference>
<dbReference type="FunFam" id="3.30.420.10:FF:000006">
    <property type="entry name" value="Ribonuclease HII"/>
    <property type="match status" value="1"/>
</dbReference>
<dbReference type="Gene3D" id="3.30.420.10">
    <property type="entry name" value="Ribonuclease H-like superfamily/Ribonuclease H"/>
    <property type="match status" value="1"/>
</dbReference>
<dbReference type="HAMAP" id="MF_00052_B">
    <property type="entry name" value="RNase_HII_B"/>
    <property type="match status" value="1"/>
</dbReference>
<dbReference type="InterPro" id="IPR022898">
    <property type="entry name" value="RNase_HII"/>
</dbReference>
<dbReference type="InterPro" id="IPR001352">
    <property type="entry name" value="RNase_HII/HIII"/>
</dbReference>
<dbReference type="InterPro" id="IPR024567">
    <property type="entry name" value="RNase_HII/HIII_dom"/>
</dbReference>
<dbReference type="InterPro" id="IPR012337">
    <property type="entry name" value="RNaseH-like_sf"/>
</dbReference>
<dbReference type="InterPro" id="IPR036397">
    <property type="entry name" value="RNaseH_sf"/>
</dbReference>
<dbReference type="NCBIfam" id="NF000594">
    <property type="entry name" value="PRK00015.1-1"/>
    <property type="match status" value="1"/>
</dbReference>
<dbReference type="NCBIfam" id="NF000595">
    <property type="entry name" value="PRK00015.1-3"/>
    <property type="match status" value="1"/>
</dbReference>
<dbReference type="NCBIfam" id="NF000596">
    <property type="entry name" value="PRK00015.1-4"/>
    <property type="match status" value="1"/>
</dbReference>
<dbReference type="PANTHER" id="PTHR10954">
    <property type="entry name" value="RIBONUCLEASE H2 SUBUNIT A"/>
    <property type="match status" value="1"/>
</dbReference>
<dbReference type="PANTHER" id="PTHR10954:SF18">
    <property type="entry name" value="RIBONUCLEASE HII"/>
    <property type="match status" value="1"/>
</dbReference>
<dbReference type="Pfam" id="PF01351">
    <property type="entry name" value="RNase_HII"/>
    <property type="match status" value="1"/>
</dbReference>
<dbReference type="SUPFAM" id="SSF53098">
    <property type="entry name" value="Ribonuclease H-like"/>
    <property type="match status" value="1"/>
</dbReference>
<dbReference type="PROSITE" id="PS51975">
    <property type="entry name" value="RNASE_H_2"/>
    <property type="match status" value="1"/>
</dbReference>